<reference key="1">
    <citation type="journal article" date="2005" name="Nat. Biotechnol.">
        <title>The complete genome sequence of the meat-borne lactic acid bacterium Lactobacillus sakei 23K.</title>
        <authorList>
            <person name="Chaillou S."/>
            <person name="Champomier-Verges M.-C."/>
            <person name="Cornet M."/>
            <person name="Crutz-Le Coq A.-M."/>
            <person name="Dudez A.-M."/>
            <person name="Martin V."/>
            <person name="Beaufils S."/>
            <person name="Darbon-Rongere E."/>
            <person name="Bossy R."/>
            <person name="Loux V."/>
            <person name="Zagorec M."/>
        </authorList>
    </citation>
    <scope>NUCLEOTIDE SEQUENCE [LARGE SCALE GENOMIC DNA]</scope>
    <source>
        <strain>23K</strain>
    </source>
</reference>
<comment type="function">
    <text evidence="1">Promotes RNA polymerase assembly. Latches the N- and C-terminal regions of the beta' subunit thereby facilitating its interaction with the beta and alpha subunits.</text>
</comment>
<comment type="catalytic activity">
    <reaction evidence="1">
        <text>RNA(n) + a ribonucleoside 5'-triphosphate = RNA(n+1) + diphosphate</text>
        <dbReference type="Rhea" id="RHEA:21248"/>
        <dbReference type="Rhea" id="RHEA-COMP:14527"/>
        <dbReference type="Rhea" id="RHEA-COMP:17342"/>
        <dbReference type="ChEBI" id="CHEBI:33019"/>
        <dbReference type="ChEBI" id="CHEBI:61557"/>
        <dbReference type="ChEBI" id="CHEBI:140395"/>
        <dbReference type="EC" id="2.7.7.6"/>
    </reaction>
</comment>
<comment type="subunit">
    <text evidence="1">The RNAP catalytic core consists of 2 alpha, 1 beta, 1 beta' and 1 omega subunit. When a sigma factor is associated with the core the holoenzyme is formed, which can initiate transcription.</text>
</comment>
<comment type="similarity">
    <text evidence="1">Belongs to the RNA polymerase subunit omega family.</text>
</comment>
<name>RPOZ_LATSS</name>
<dbReference type="EC" id="2.7.7.6" evidence="1"/>
<dbReference type="EMBL" id="CR936503">
    <property type="protein sequence ID" value="CAI54990.1"/>
    <property type="molecule type" value="Genomic_DNA"/>
</dbReference>
<dbReference type="RefSeq" id="WP_011374395.1">
    <property type="nucleotide sequence ID" value="NC_007576.1"/>
</dbReference>
<dbReference type="SMR" id="Q38XT9"/>
<dbReference type="STRING" id="314315.LCA_0686"/>
<dbReference type="GeneID" id="57133540"/>
<dbReference type="KEGG" id="lsa:LCA_0686"/>
<dbReference type="eggNOG" id="COG1758">
    <property type="taxonomic scope" value="Bacteria"/>
</dbReference>
<dbReference type="HOGENOM" id="CLU_125406_0_0_9"/>
<dbReference type="OrthoDB" id="9815459at2"/>
<dbReference type="Proteomes" id="UP000002707">
    <property type="component" value="Chromosome"/>
</dbReference>
<dbReference type="GO" id="GO:0000428">
    <property type="term" value="C:DNA-directed RNA polymerase complex"/>
    <property type="evidence" value="ECO:0007669"/>
    <property type="project" value="UniProtKB-KW"/>
</dbReference>
<dbReference type="GO" id="GO:0003677">
    <property type="term" value="F:DNA binding"/>
    <property type="evidence" value="ECO:0007669"/>
    <property type="project" value="UniProtKB-UniRule"/>
</dbReference>
<dbReference type="GO" id="GO:0003899">
    <property type="term" value="F:DNA-directed RNA polymerase activity"/>
    <property type="evidence" value="ECO:0007669"/>
    <property type="project" value="UniProtKB-UniRule"/>
</dbReference>
<dbReference type="GO" id="GO:0006351">
    <property type="term" value="P:DNA-templated transcription"/>
    <property type="evidence" value="ECO:0007669"/>
    <property type="project" value="UniProtKB-UniRule"/>
</dbReference>
<dbReference type="Gene3D" id="3.90.940.10">
    <property type="match status" value="1"/>
</dbReference>
<dbReference type="HAMAP" id="MF_00366">
    <property type="entry name" value="RNApol_bact_RpoZ"/>
    <property type="match status" value="1"/>
</dbReference>
<dbReference type="InterPro" id="IPR003716">
    <property type="entry name" value="DNA-dir_RNA_pol_omega"/>
</dbReference>
<dbReference type="InterPro" id="IPR006110">
    <property type="entry name" value="Pol_omega/Rpo6/RPB6"/>
</dbReference>
<dbReference type="InterPro" id="IPR036161">
    <property type="entry name" value="RPB6/omega-like_sf"/>
</dbReference>
<dbReference type="NCBIfam" id="TIGR00690">
    <property type="entry name" value="rpoZ"/>
    <property type="match status" value="1"/>
</dbReference>
<dbReference type="PANTHER" id="PTHR34476">
    <property type="entry name" value="DNA-DIRECTED RNA POLYMERASE SUBUNIT OMEGA"/>
    <property type="match status" value="1"/>
</dbReference>
<dbReference type="PANTHER" id="PTHR34476:SF1">
    <property type="entry name" value="DNA-DIRECTED RNA POLYMERASE SUBUNIT OMEGA"/>
    <property type="match status" value="1"/>
</dbReference>
<dbReference type="Pfam" id="PF01192">
    <property type="entry name" value="RNA_pol_Rpb6"/>
    <property type="match status" value="1"/>
</dbReference>
<dbReference type="SMART" id="SM01409">
    <property type="entry name" value="RNA_pol_Rpb6"/>
    <property type="match status" value="1"/>
</dbReference>
<dbReference type="SUPFAM" id="SSF63562">
    <property type="entry name" value="RPB6/omega subunit-like"/>
    <property type="match status" value="1"/>
</dbReference>
<evidence type="ECO:0000255" key="1">
    <source>
        <dbReference type="HAMAP-Rule" id="MF_00366"/>
    </source>
</evidence>
<gene>
    <name evidence="1" type="primary">rpoZ</name>
    <name type="ordered locus">LCA_0686</name>
</gene>
<feature type="chain" id="PRO_0000237469" description="DNA-directed RNA polymerase subunit omega">
    <location>
        <begin position="1"/>
        <end position="85"/>
    </location>
</feature>
<proteinExistence type="inferred from homology"/>
<protein>
    <recommendedName>
        <fullName evidence="1">DNA-directed RNA polymerase subunit omega</fullName>
        <shortName evidence="1">RNAP omega subunit</shortName>
        <ecNumber evidence="1">2.7.7.6</ecNumber>
    </recommendedName>
    <alternativeName>
        <fullName evidence="1">RNA polymerase omega subunit</fullName>
    </alternativeName>
    <alternativeName>
        <fullName evidence="1">Transcriptase subunit omega</fullName>
    </alternativeName>
</protein>
<sequence>MIVYPSIDKLLENVNSRYSLAVLASKRAHQIEAGDLKMLSEYKSPKTVGMAMEEIAAGNVTIDPDSLMLEKDAEKMDKLSQKDGE</sequence>
<keyword id="KW-0240">DNA-directed RNA polymerase</keyword>
<keyword id="KW-0548">Nucleotidyltransferase</keyword>
<keyword id="KW-1185">Reference proteome</keyword>
<keyword id="KW-0804">Transcription</keyword>
<keyword id="KW-0808">Transferase</keyword>
<accession>Q38XT9</accession>
<organism>
    <name type="scientific">Latilactobacillus sakei subsp. sakei (strain 23K)</name>
    <name type="common">Lactobacillus sakei subsp. sakei</name>
    <dbReference type="NCBI Taxonomy" id="314315"/>
    <lineage>
        <taxon>Bacteria</taxon>
        <taxon>Bacillati</taxon>
        <taxon>Bacillota</taxon>
        <taxon>Bacilli</taxon>
        <taxon>Lactobacillales</taxon>
        <taxon>Lactobacillaceae</taxon>
        <taxon>Latilactobacillus</taxon>
    </lineage>
</organism>